<dbReference type="EC" id="2.7.4.3" evidence="1"/>
<dbReference type="EMBL" id="CP001107">
    <property type="protein sequence ID" value="ACR74229.1"/>
    <property type="molecule type" value="Genomic_DNA"/>
</dbReference>
<dbReference type="RefSeq" id="WP_012741346.1">
    <property type="nucleotide sequence ID" value="NZ_CAXSYD010000003.1"/>
</dbReference>
<dbReference type="SMR" id="C4ZBT9"/>
<dbReference type="STRING" id="515619.EUBREC_0438"/>
<dbReference type="PaxDb" id="515619-EUBREC_0438"/>
<dbReference type="KEGG" id="ere:EUBREC_0438"/>
<dbReference type="HOGENOM" id="CLU_032354_1_2_9"/>
<dbReference type="UniPathway" id="UPA00588">
    <property type="reaction ID" value="UER00649"/>
</dbReference>
<dbReference type="Proteomes" id="UP000001477">
    <property type="component" value="Chromosome"/>
</dbReference>
<dbReference type="GO" id="GO:0005737">
    <property type="term" value="C:cytoplasm"/>
    <property type="evidence" value="ECO:0007669"/>
    <property type="project" value="UniProtKB-SubCell"/>
</dbReference>
<dbReference type="GO" id="GO:0004017">
    <property type="term" value="F:adenylate kinase activity"/>
    <property type="evidence" value="ECO:0007669"/>
    <property type="project" value="UniProtKB-UniRule"/>
</dbReference>
<dbReference type="GO" id="GO:0005524">
    <property type="term" value="F:ATP binding"/>
    <property type="evidence" value="ECO:0007669"/>
    <property type="project" value="UniProtKB-UniRule"/>
</dbReference>
<dbReference type="GO" id="GO:0008270">
    <property type="term" value="F:zinc ion binding"/>
    <property type="evidence" value="ECO:0007669"/>
    <property type="project" value="UniProtKB-UniRule"/>
</dbReference>
<dbReference type="GO" id="GO:0044209">
    <property type="term" value="P:AMP salvage"/>
    <property type="evidence" value="ECO:0007669"/>
    <property type="project" value="UniProtKB-UniRule"/>
</dbReference>
<dbReference type="CDD" id="cd01428">
    <property type="entry name" value="ADK"/>
    <property type="match status" value="1"/>
</dbReference>
<dbReference type="FunFam" id="3.40.50.300:FF:000106">
    <property type="entry name" value="Adenylate kinase mitochondrial"/>
    <property type="match status" value="1"/>
</dbReference>
<dbReference type="Gene3D" id="3.40.50.300">
    <property type="entry name" value="P-loop containing nucleotide triphosphate hydrolases"/>
    <property type="match status" value="1"/>
</dbReference>
<dbReference type="HAMAP" id="MF_00235">
    <property type="entry name" value="Adenylate_kinase_Adk"/>
    <property type="match status" value="1"/>
</dbReference>
<dbReference type="InterPro" id="IPR006259">
    <property type="entry name" value="Adenyl_kin_sub"/>
</dbReference>
<dbReference type="InterPro" id="IPR000850">
    <property type="entry name" value="Adenylat/UMP-CMP_kin"/>
</dbReference>
<dbReference type="InterPro" id="IPR033690">
    <property type="entry name" value="Adenylat_kinase_CS"/>
</dbReference>
<dbReference type="InterPro" id="IPR007862">
    <property type="entry name" value="Adenylate_kinase_lid-dom"/>
</dbReference>
<dbReference type="InterPro" id="IPR027417">
    <property type="entry name" value="P-loop_NTPase"/>
</dbReference>
<dbReference type="NCBIfam" id="TIGR01351">
    <property type="entry name" value="adk"/>
    <property type="match status" value="1"/>
</dbReference>
<dbReference type="NCBIfam" id="NF001379">
    <property type="entry name" value="PRK00279.1-1"/>
    <property type="match status" value="1"/>
</dbReference>
<dbReference type="NCBIfam" id="NF001380">
    <property type="entry name" value="PRK00279.1-2"/>
    <property type="match status" value="1"/>
</dbReference>
<dbReference type="NCBIfam" id="NF001381">
    <property type="entry name" value="PRK00279.1-3"/>
    <property type="match status" value="1"/>
</dbReference>
<dbReference type="NCBIfam" id="NF011100">
    <property type="entry name" value="PRK14527.1"/>
    <property type="match status" value="1"/>
</dbReference>
<dbReference type="PANTHER" id="PTHR23359">
    <property type="entry name" value="NUCLEOTIDE KINASE"/>
    <property type="match status" value="1"/>
</dbReference>
<dbReference type="Pfam" id="PF00406">
    <property type="entry name" value="ADK"/>
    <property type="match status" value="1"/>
</dbReference>
<dbReference type="Pfam" id="PF05191">
    <property type="entry name" value="ADK_lid"/>
    <property type="match status" value="1"/>
</dbReference>
<dbReference type="PRINTS" id="PR00094">
    <property type="entry name" value="ADENYLTKNASE"/>
</dbReference>
<dbReference type="SUPFAM" id="SSF52540">
    <property type="entry name" value="P-loop containing nucleoside triphosphate hydrolases"/>
    <property type="match status" value="1"/>
</dbReference>
<dbReference type="PROSITE" id="PS00113">
    <property type="entry name" value="ADENYLATE_KINASE"/>
    <property type="match status" value="1"/>
</dbReference>
<protein>
    <recommendedName>
        <fullName evidence="1">Adenylate kinase</fullName>
        <shortName evidence="1">AK</shortName>
        <ecNumber evidence="1">2.7.4.3</ecNumber>
    </recommendedName>
    <alternativeName>
        <fullName evidence="1">ATP-AMP transphosphorylase</fullName>
    </alternativeName>
    <alternativeName>
        <fullName evidence="1">ATP:AMP phosphotransferase</fullName>
    </alternativeName>
    <alternativeName>
        <fullName evidence="1">Adenylate monophosphate kinase</fullName>
    </alternativeName>
</protein>
<evidence type="ECO:0000255" key="1">
    <source>
        <dbReference type="HAMAP-Rule" id="MF_00235"/>
    </source>
</evidence>
<feature type="chain" id="PRO_1000204411" description="Adenylate kinase">
    <location>
        <begin position="1"/>
        <end position="214"/>
    </location>
</feature>
<feature type="region of interest" description="NMP" evidence="1">
    <location>
        <begin position="30"/>
        <end position="59"/>
    </location>
</feature>
<feature type="region of interest" description="LID" evidence="1">
    <location>
        <begin position="126"/>
        <end position="163"/>
    </location>
</feature>
<feature type="binding site" evidence="1">
    <location>
        <begin position="10"/>
        <end position="15"/>
    </location>
    <ligand>
        <name>ATP</name>
        <dbReference type="ChEBI" id="CHEBI:30616"/>
    </ligand>
</feature>
<feature type="binding site" evidence="1">
    <location>
        <position position="31"/>
    </location>
    <ligand>
        <name>AMP</name>
        <dbReference type="ChEBI" id="CHEBI:456215"/>
    </ligand>
</feature>
<feature type="binding site" evidence="1">
    <location>
        <position position="36"/>
    </location>
    <ligand>
        <name>AMP</name>
        <dbReference type="ChEBI" id="CHEBI:456215"/>
    </ligand>
</feature>
<feature type="binding site" evidence="1">
    <location>
        <begin position="57"/>
        <end position="59"/>
    </location>
    <ligand>
        <name>AMP</name>
        <dbReference type="ChEBI" id="CHEBI:456215"/>
    </ligand>
</feature>
<feature type="binding site" evidence="1">
    <location>
        <begin position="85"/>
        <end position="88"/>
    </location>
    <ligand>
        <name>AMP</name>
        <dbReference type="ChEBI" id="CHEBI:456215"/>
    </ligand>
</feature>
<feature type="binding site" evidence="1">
    <location>
        <position position="92"/>
    </location>
    <ligand>
        <name>AMP</name>
        <dbReference type="ChEBI" id="CHEBI:456215"/>
    </ligand>
</feature>
<feature type="binding site" evidence="1">
    <location>
        <position position="127"/>
    </location>
    <ligand>
        <name>ATP</name>
        <dbReference type="ChEBI" id="CHEBI:30616"/>
    </ligand>
</feature>
<feature type="binding site" evidence="1">
    <location>
        <position position="130"/>
    </location>
    <ligand>
        <name>Zn(2+)</name>
        <dbReference type="ChEBI" id="CHEBI:29105"/>
        <note>structural</note>
    </ligand>
</feature>
<feature type="binding site" evidence="1">
    <location>
        <position position="133"/>
    </location>
    <ligand>
        <name>Zn(2+)</name>
        <dbReference type="ChEBI" id="CHEBI:29105"/>
        <note>structural</note>
    </ligand>
</feature>
<feature type="binding site" evidence="1">
    <location>
        <begin position="136"/>
        <end position="137"/>
    </location>
    <ligand>
        <name>ATP</name>
        <dbReference type="ChEBI" id="CHEBI:30616"/>
    </ligand>
</feature>
<feature type="binding site" evidence="1">
    <location>
        <position position="150"/>
    </location>
    <ligand>
        <name>Zn(2+)</name>
        <dbReference type="ChEBI" id="CHEBI:29105"/>
        <note>structural</note>
    </ligand>
</feature>
<feature type="binding site" evidence="1">
    <location>
        <position position="153"/>
    </location>
    <ligand>
        <name>Zn(2+)</name>
        <dbReference type="ChEBI" id="CHEBI:29105"/>
        <note>structural</note>
    </ligand>
</feature>
<feature type="binding site" evidence="1">
    <location>
        <position position="160"/>
    </location>
    <ligand>
        <name>AMP</name>
        <dbReference type="ChEBI" id="CHEBI:456215"/>
    </ligand>
</feature>
<feature type="binding site" evidence="1">
    <location>
        <position position="171"/>
    </location>
    <ligand>
        <name>AMP</name>
        <dbReference type="ChEBI" id="CHEBI:456215"/>
    </ligand>
</feature>
<feature type="binding site" evidence="1">
    <location>
        <position position="199"/>
    </location>
    <ligand>
        <name>ATP</name>
        <dbReference type="ChEBI" id="CHEBI:30616"/>
    </ligand>
</feature>
<accession>C4ZBT9</accession>
<gene>
    <name evidence="1" type="primary">adk</name>
    <name type="ordered locus">EUBREC_0438</name>
</gene>
<keyword id="KW-0067">ATP-binding</keyword>
<keyword id="KW-0963">Cytoplasm</keyword>
<keyword id="KW-0418">Kinase</keyword>
<keyword id="KW-0479">Metal-binding</keyword>
<keyword id="KW-0545">Nucleotide biosynthesis</keyword>
<keyword id="KW-0547">Nucleotide-binding</keyword>
<keyword id="KW-0808">Transferase</keyword>
<keyword id="KW-0862">Zinc</keyword>
<comment type="function">
    <text evidence="1">Catalyzes the reversible transfer of the terminal phosphate group between ATP and AMP. Plays an important role in cellular energy homeostasis and in adenine nucleotide metabolism.</text>
</comment>
<comment type="catalytic activity">
    <reaction evidence="1">
        <text>AMP + ATP = 2 ADP</text>
        <dbReference type="Rhea" id="RHEA:12973"/>
        <dbReference type="ChEBI" id="CHEBI:30616"/>
        <dbReference type="ChEBI" id="CHEBI:456215"/>
        <dbReference type="ChEBI" id="CHEBI:456216"/>
        <dbReference type="EC" id="2.7.4.3"/>
    </reaction>
</comment>
<comment type="pathway">
    <text evidence="1">Purine metabolism; AMP biosynthesis via salvage pathway; AMP from ADP: step 1/1.</text>
</comment>
<comment type="subunit">
    <text evidence="1">Monomer.</text>
</comment>
<comment type="subcellular location">
    <subcellularLocation>
        <location evidence="1">Cytoplasm</location>
    </subcellularLocation>
</comment>
<comment type="domain">
    <text evidence="1">Consists of three domains, a large central CORE domain and two small peripheral domains, NMPbind and LID, which undergo movements during catalysis. The LID domain closes over the site of phosphoryl transfer upon ATP binding. Assembling and dissambling the active center during each catalytic cycle provides an effective means to prevent ATP hydrolysis. Some bacteria have evolved a zinc-coordinating structure that stabilizes the LID domain.</text>
</comment>
<comment type="similarity">
    <text evidence="1">Belongs to the adenylate kinase family.</text>
</comment>
<organism>
    <name type="scientific">Agathobacter rectalis (strain ATCC 33656 / DSM 3377 / JCM 17463 / KCTC 5835 / VPI 0990)</name>
    <name type="common">Eubacterium rectale</name>
    <dbReference type="NCBI Taxonomy" id="515619"/>
    <lineage>
        <taxon>Bacteria</taxon>
        <taxon>Bacillati</taxon>
        <taxon>Bacillota</taxon>
        <taxon>Clostridia</taxon>
        <taxon>Lachnospirales</taxon>
        <taxon>Lachnospiraceae</taxon>
        <taxon>Agathobacter</taxon>
    </lineage>
</organism>
<name>KAD_AGARV</name>
<reference key="1">
    <citation type="journal article" date="2009" name="Proc. Natl. Acad. Sci. U.S.A.">
        <title>Characterizing a model human gut microbiota composed of members of its two dominant bacterial phyla.</title>
        <authorList>
            <person name="Mahowald M.A."/>
            <person name="Rey F.E."/>
            <person name="Seedorf H."/>
            <person name="Turnbaugh P.J."/>
            <person name="Fulton R.S."/>
            <person name="Wollam A."/>
            <person name="Shah N."/>
            <person name="Wang C."/>
            <person name="Magrini V."/>
            <person name="Wilson R.K."/>
            <person name="Cantarel B.L."/>
            <person name="Coutinho P.M."/>
            <person name="Henrissat B."/>
            <person name="Crock L.W."/>
            <person name="Russell A."/>
            <person name="Verberkmoes N.C."/>
            <person name="Hettich R.L."/>
            <person name="Gordon J.I."/>
        </authorList>
    </citation>
    <scope>NUCLEOTIDE SEQUENCE [LARGE SCALE GENOMIC DNA]</scope>
    <source>
        <strain>ATCC 33656 / DSM 3377 / JCM 17463 / KCTC 5835 / LMG 30912 / VPI 0990</strain>
    </source>
</reference>
<proteinExistence type="inferred from homology"/>
<sequence length="214" mass="23383">MKIIMLGAPGAGKGTQAKQIAAKYSIPHISTGDIFRANIKNGTELGKKAKTYMDQGALVPDELTCDLVMDRIQQDDCKNGFVLDGFPRTIPQAKALDDALTKIGEKMDYAIDVDVPDENIVNRMGGRRACLNCGATYHIVFNPTKVEGKCDACGADTVLRDDDKPETVQKRLAVYHEQTQPLIEYYDKQGILKSVDGTKPMDEVFSAIVGILGE</sequence>